<keyword id="KW-0067">ATP-binding</keyword>
<keyword id="KW-0347">Helicase</keyword>
<keyword id="KW-0378">Hydrolase</keyword>
<keyword id="KW-0547">Nucleotide-binding</keyword>
<keyword id="KW-0539">Nucleus</keyword>
<keyword id="KW-1185">Reference proteome</keyword>
<keyword id="KW-0690">Ribosome biogenesis</keyword>
<keyword id="KW-0694">RNA-binding</keyword>
<keyword id="KW-0698">rRNA processing</keyword>
<dbReference type="EC" id="3.6.4.13"/>
<dbReference type="EMBL" id="CH476600">
    <property type="protein sequence ID" value="EAU34128.1"/>
    <property type="status" value="ALT_SEQ"/>
    <property type="molecule type" value="Genomic_DNA"/>
</dbReference>
<dbReference type="RefSeq" id="XP_001214237.1">
    <property type="nucleotide sequence ID" value="XM_001214237.1"/>
</dbReference>
<dbReference type="SMR" id="Q0CMM5"/>
<dbReference type="STRING" id="341663.Q0CMM5"/>
<dbReference type="GeneID" id="4321060"/>
<dbReference type="eggNOG" id="KOG0342">
    <property type="taxonomic scope" value="Eukaryota"/>
</dbReference>
<dbReference type="eggNOG" id="KOG0343">
    <property type="taxonomic scope" value="Eukaryota"/>
</dbReference>
<dbReference type="OrthoDB" id="10259640at2759"/>
<dbReference type="Proteomes" id="UP000007963">
    <property type="component" value="Unassembled WGS sequence"/>
</dbReference>
<dbReference type="GO" id="GO:0005730">
    <property type="term" value="C:nucleolus"/>
    <property type="evidence" value="ECO:0007669"/>
    <property type="project" value="UniProtKB-SubCell"/>
</dbReference>
<dbReference type="GO" id="GO:0032040">
    <property type="term" value="C:small-subunit processome"/>
    <property type="evidence" value="ECO:0007669"/>
    <property type="project" value="EnsemblFungi"/>
</dbReference>
<dbReference type="GO" id="GO:0005524">
    <property type="term" value="F:ATP binding"/>
    <property type="evidence" value="ECO:0007669"/>
    <property type="project" value="UniProtKB-KW"/>
</dbReference>
<dbReference type="GO" id="GO:0016887">
    <property type="term" value="F:ATP hydrolysis activity"/>
    <property type="evidence" value="ECO:0007669"/>
    <property type="project" value="RHEA"/>
</dbReference>
<dbReference type="GO" id="GO:0042802">
    <property type="term" value="F:identical protein binding"/>
    <property type="evidence" value="ECO:0007669"/>
    <property type="project" value="EnsemblFungi"/>
</dbReference>
<dbReference type="GO" id="GO:0003723">
    <property type="term" value="F:RNA binding"/>
    <property type="evidence" value="ECO:0007669"/>
    <property type="project" value="UniProtKB-KW"/>
</dbReference>
<dbReference type="GO" id="GO:0003724">
    <property type="term" value="F:RNA helicase activity"/>
    <property type="evidence" value="ECO:0007669"/>
    <property type="project" value="UniProtKB-EC"/>
</dbReference>
<dbReference type="GO" id="GO:0006364">
    <property type="term" value="P:rRNA processing"/>
    <property type="evidence" value="ECO:0007669"/>
    <property type="project" value="UniProtKB-KW"/>
</dbReference>
<dbReference type="CDD" id="cd17941">
    <property type="entry name" value="DEADc_DDX10"/>
    <property type="match status" value="1"/>
</dbReference>
<dbReference type="CDD" id="cd18787">
    <property type="entry name" value="SF2_C_DEAD"/>
    <property type="match status" value="1"/>
</dbReference>
<dbReference type="Gene3D" id="3.40.50.300">
    <property type="entry name" value="P-loop containing nucleotide triphosphate hydrolases"/>
    <property type="match status" value="2"/>
</dbReference>
<dbReference type="InterPro" id="IPR011545">
    <property type="entry name" value="DEAD/DEAH_box_helicase_dom"/>
</dbReference>
<dbReference type="InterPro" id="IPR014001">
    <property type="entry name" value="Helicase_ATP-bd"/>
</dbReference>
<dbReference type="InterPro" id="IPR001650">
    <property type="entry name" value="Helicase_C-like"/>
</dbReference>
<dbReference type="InterPro" id="IPR027417">
    <property type="entry name" value="P-loop_NTPase"/>
</dbReference>
<dbReference type="InterPro" id="IPR000629">
    <property type="entry name" value="RNA-helicase_DEAD-box_CS"/>
</dbReference>
<dbReference type="InterPro" id="IPR014014">
    <property type="entry name" value="RNA_helicase_DEAD_Q_motif"/>
</dbReference>
<dbReference type="InterPro" id="IPR025313">
    <property type="entry name" value="SPB4-like_CTE"/>
</dbReference>
<dbReference type="PANTHER" id="PTHR24031">
    <property type="entry name" value="RNA HELICASE"/>
    <property type="match status" value="1"/>
</dbReference>
<dbReference type="Pfam" id="PF13959">
    <property type="entry name" value="CTE_SPB4"/>
    <property type="match status" value="1"/>
</dbReference>
<dbReference type="Pfam" id="PF00270">
    <property type="entry name" value="DEAD"/>
    <property type="match status" value="1"/>
</dbReference>
<dbReference type="Pfam" id="PF00271">
    <property type="entry name" value="Helicase_C"/>
    <property type="match status" value="1"/>
</dbReference>
<dbReference type="SMART" id="SM00487">
    <property type="entry name" value="DEXDc"/>
    <property type="match status" value="1"/>
</dbReference>
<dbReference type="SMART" id="SM01178">
    <property type="entry name" value="DUF4217"/>
    <property type="match status" value="1"/>
</dbReference>
<dbReference type="SMART" id="SM00490">
    <property type="entry name" value="HELICc"/>
    <property type="match status" value="1"/>
</dbReference>
<dbReference type="SUPFAM" id="SSF52540">
    <property type="entry name" value="P-loop containing nucleoside triphosphate hydrolases"/>
    <property type="match status" value="2"/>
</dbReference>
<dbReference type="PROSITE" id="PS00039">
    <property type="entry name" value="DEAD_ATP_HELICASE"/>
    <property type="match status" value="1"/>
</dbReference>
<dbReference type="PROSITE" id="PS51192">
    <property type="entry name" value="HELICASE_ATP_BIND_1"/>
    <property type="match status" value="1"/>
</dbReference>
<dbReference type="PROSITE" id="PS51194">
    <property type="entry name" value="HELICASE_CTER"/>
    <property type="match status" value="1"/>
</dbReference>
<dbReference type="PROSITE" id="PS51195">
    <property type="entry name" value="Q_MOTIF"/>
    <property type="match status" value="1"/>
</dbReference>
<name>DBP4_ASPTN</name>
<protein>
    <recommendedName>
        <fullName>ATP-dependent RNA helicase dbp4</fullName>
        <ecNumber>3.6.4.13</ecNumber>
    </recommendedName>
</protein>
<proteinExistence type="inferred from homology"/>
<feature type="chain" id="PRO_0000310199" description="ATP-dependent RNA helicase dbp4">
    <location>
        <begin position="1"/>
        <end position="804"/>
    </location>
</feature>
<feature type="domain" description="Helicase ATP-binding" evidence="2">
    <location>
        <begin position="77"/>
        <end position="251"/>
    </location>
</feature>
<feature type="domain" description="Helicase C-terminal" evidence="3">
    <location>
        <begin position="277"/>
        <end position="436"/>
    </location>
</feature>
<feature type="region of interest" description="Disordered" evidence="4">
    <location>
        <begin position="1"/>
        <end position="24"/>
    </location>
</feature>
<feature type="region of interest" description="Disordered" evidence="4">
    <location>
        <begin position="493"/>
        <end position="541"/>
    </location>
</feature>
<feature type="region of interest" description="Disordered" evidence="4">
    <location>
        <begin position="589"/>
        <end position="615"/>
    </location>
</feature>
<feature type="region of interest" description="Disordered" evidence="4">
    <location>
        <begin position="695"/>
        <end position="804"/>
    </location>
</feature>
<feature type="short sequence motif" description="Q motif">
    <location>
        <begin position="46"/>
        <end position="74"/>
    </location>
</feature>
<feature type="short sequence motif" description="DEAD box">
    <location>
        <begin position="199"/>
        <end position="202"/>
    </location>
</feature>
<feature type="compositionally biased region" description="Basic and acidic residues" evidence="4">
    <location>
        <begin position="521"/>
        <end position="541"/>
    </location>
</feature>
<feature type="compositionally biased region" description="Basic and acidic residues" evidence="4">
    <location>
        <begin position="695"/>
        <end position="705"/>
    </location>
</feature>
<feature type="compositionally biased region" description="Basic residues" evidence="4">
    <location>
        <begin position="706"/>
        <end position="715"/>
    </location>
</feature>
<feature type="binding site" evidence="2">
    <location>
        <begin position="90"/>
        <end position="97"/>
    </location>
    <ligand>
        <name>ATP</name>
        <dbReference type="ChEBI" id="CHEBI:30616"/>
    </ligand>
</feature>
<accession>Q0CMM5</accession>
<evidence type="ECO:0000250" key="1"/>
<evidence type="ECO:0000255" key="2">
    <source>
        <dbReference type="PROSITE-ProRule" id="PRU00541"/>
    </source>
</evidence>
<evidence type="ECO:0000255" key="3">
    <source>
        <dbReference type="PROSITE-ProRule" id="PRU00542"/>
    </source>
</evidence>
<evidence type="ECO:0000256" key="4">
    <source>
        <dbReference type="SAM" id="MobiDB-lite"/>
    </source>
</evidence>
<evidence type="ECO:0000305" key="5"/>
<sequence length="804" mass="91077">MAPANAPRNGKYAKSSQRTLKRKRVQEDLSSLVQRVEDLDLKESFKAFTDLPLSEPTLSGLSASHYKTLTDIQSRAVSHALKGRDILGAAKTGSGKTLAFLIPVLENLYRKQWAEHDGLGALILSPTRELAIQIFEVLRKVGRYHHFSAGLVIGGKSLKEEQERLGKMNILVCTPGRMLQHLDQTALFDTYNLQMLVLDEADRIMDMGFQKTVDAIIGHLPKERQTMLFSATQTKKVSDLARLSLQDPEYVAVHEAAASATPSTLQQHYVVTPLPQKLDILWSFIRSNLKSKTIVFLSSGKQVRFVYEAFRHLQPGIPLMHLHGRQKQGGRLDITTKYSQAKHAVLFSTDVAARGLDFPAVDWVIQLDCPEDADTYIHRVGRTARYERDGRAVLFLDPSEEQGMLKRLEQKKVPVEKINVKANKQQSIKNQLQNMCFKDPELKYLGQKAFISYVKSVYVQKDKEIFKLKDLDLEEFASSLGLPGAPRIKFIKGDDTKERKNAPRAVAHLSSDDDESDAEDDEKKSKKKDAPQVRTKYDRMFERRNQDVLAGHYTKLINDDGTLADPKATDEADEDNDFLSVKRRFDAGDKQLEVGGSSDESGSDSEAETGKKDVKVVNIDGKEPLVIDSKRREKLLKSKKKLLKFKGKGTKLIYDDEGNAHEIYEMEDEEQFRAKGDAKEQQARFLAAEAERTRLADVEDKELVKQKRREKKEKRKARERELLAQEEQEEMLVQLPPPEDDDQGRFSPSEDEAPRPSKKQRVQFAEPAESEEERRPKKPKKSTAEPKEIQTLEDLESLATGLLG</sequence>
<reference key="1">
    <citation type="submission" date="2005-09" db="EMBL/GenBank/DDBJ databases">
        <title>Annotation of the Aspergillus terreus NIH2624 genome.</title>
        <authorList>
            <person name="Birren B.W."/>
            <person name="Lander E.S."/>
            <person name="Galagan J.E."/>
            <person name="Nusbaum C."/>
            <person name="Devon K."/>
            <person name="Henn M."/>
            <person name="Ma L.-J."/>
            <person name="Jaffe D.B."/>
            <person name="Butler J."/>
            <person name="Alvarez P."/>
            <person name="Gnerre S."/>
            <person name="Grabherr M."/>
            <person name="Kleber M."/>
            <person name="Mauceli E.W."/>
            <person name="Brockman W."/>
            <person name="Rounsley S."/>
            <person name="Young S.K."/>
            <person name="LaButti K."/>
            <person name="Pushparaj V."/>
            <person name="DeCaprio D."/>
            <person name="Crawford M."/>
            <person name="Koehrsen M."/>
            <person name="Engels R."/>
            <person name="Montgomery P."/>
            <person name="Pearson M."/>
            <person name="Howarth C."/>
            <person name="Larson L."/>
            <person name="Luoma S."/>
            <person name="White J."/>
            <person name="Alvarado L."/>
            <person name="Kodira C.D."/>
            <person name="Zeng Q."/>
            <person name="Oleary S."/>
            <person name="Yandava C."/>
            <person name="Denning D.W."/>
            <person name="Nierman W.C."/>
            <person name="Milne T."/>
            <person name="Madden K."/>
        </authorList>
    </citation>
    <scope>NUCLEOTIDE SEQUENCE [LARGE SCALE GENOMIC DNA]</scope>
    <source>
        <strain>NIH 2624 / FGSC A1156</strain>
    </source>
</reference>
<gene>
    <name type="primary">dbp4</name>
    <name type="ORF">ATEG_05059</name>
</gene>
<comment type="function">
    <text evidence="1">ATP-dependent RNA helicase required for ribosome biogenesis. Involved in the release of U14 snoRNA in pre-ribosomal complexes. Required for pre-rRNA cleavage at site A2 (By similarity).</text>
</comment>
<comment type="catalytic activity">
    <reaction>
        <text>ATP + H2O = ADP + phosphate + H(+)</text>
        <dbReference type="Rhea" id="RHEA:13065"/>
        <dbReference type="ChEBI" id="CHEBI:15377"/>
        <dbReference type="ChEBI" id="CHEBI:15378"/>
        <dbReference type="ChEBI" id="CHEBI:30616"/>
        <dbReference type="ChEBI" id="CHEBI:43474"/>
        <dbReference type="ChEBI" id="CHEBI:456216"/>
        <dbReference type="EC" id="3.6.4.13"/>
    </reaction>
</comment>
<comment type="subunit">
    <text evidence="1">Interacts with the U3 and U14 snoRNAs. Associates with pre-ribosomal complexes (By similarity).</text>
</comment>
<comment type="subcellular location">
    <subcellularLocation>
        <location evidence="1">Nucleus</location>
        <location evidence="1">Nucleolus</location>
    </subcellularLocation>
</comment>
<comment type="domain">
    <text>The Q motif is unique to and characteristic of the DEAD box family of RNA helicases and controls ATP binding and hydrolysis.</text>
</comment>
<comment type="similarity">
    <text evidence="5">Belongs to the DEAD box helicase family. DDX10/DBP4 subfamily.</text>
</comment>
<comment type="sequence caution" evidence="5">
    <conflict type="erroneous gene model prediction">
        <sequence resource="EMBL-CDS" id="EAU34128"/>
    </conflict>
</comment>
<comment type="sequence caution" evidence="5">
    <conflict type="frameshift">
        <sequence resource="EMBL-CDS" id="EAU34128"/>
    </conflict>
</comment>
<organism>
    <name type="scientific">Aspergillus terreus (strain NIH 2624 / FGSC A1156)</name>
    <dbReference type="NCBI Taxonomy" id="341663"/>
    <lineage>
        <taxon>Eukaryota</taxon>
        <taxon>Fungi</taxon>
        <taxon>Dikarya</taxon>
        <taxon>Ascomycota</taxon>
        <taxon>Pezizomycotina</taxon>
        <taxon>Eurotiomycetes</taxon>
        <taxon>Eurotiomycetidae</taxon>
        <taxon>Eurotiales</taxon>
        <taxon>Aspergillaceae</taxon>
        <taxon>Aspergillus</taxon>
        <taxon>Aspergillus subgen. Circumdati</taxon>
    </lineage>
</organism>